<keyword id="KW-0002">3D-structure</keyword>
<keyword id="KW-0025">Alternative splicing</keyword>
<keyword id="KW-0963">Cytoplasm</keyword>
<keyword id="KW-0217">Developmental protein</keyword>
<keyword id="KW-0256">Endoplasmic reticulum</keyword>
<keyword id="KW-1185">Reference proteome</keyword>
<keyword id="KW-0687">Ribonucleoprotein</keyword>
<keyword id="KW-0689">Ribosomal protein</keyword>
<keyword id="KW-0698">rRNA processing</keyword>
<keyword id="KW-0810">Translation regulation</keyword>
<accession>O76927</accession>
<accession>A4V027</accession>
<reference evidence="9 13" key="1">
    <citation type="journal article" date="1999" name="Mol. Cell. Biol.">
        <title>Down-regulation of RpS21, a putative translation initiation factor interacting with P40, produces viable minute imagos and larval lethality with overgrown hematopoietic organs and imaginal discs.</title>
        <authorList>
            <person name="Toeroek I."/>
            <person name="Herrmann-Horle D."/>
            <person name="Kiss I."/>
            <person name="Tick G."/>
            <person name="Speer G."/>
            <person name="Schmitt R."/>
            <person name="Mechler B.M."/>
        </authorList>
    </citation>
    <scope>NUCLEOTIDE SEQUENCE [GENOMIC DNA]</scope>
    <scope>FUNCTION</scope>
    <scope>INTERACTION WITH STA</scope>
    <scope>SUBCELLULAR LOCATION</scope>
    <scope>DEVELOPMENTAL STAGE</scope>
</reference>
<reference evidence="11" key="2">
    <citation type="journal article" date="2000" name="Science">
        <title>The genome sequence of Drosophila melanogaster.</title>
        <authorList>
            <person name="Adams M.D."/>
            <person name="Celniker S.E."/>
            <person name="Holt R.A."/>
            <person name="Evans C.A."/>
            <person name="Gocayne J.D."/>
            <person name="Amanatides P.G."/>
            <person name="Scherer S.E."/>
            <person name="Li P.W."/>
            <person name="Hoskins R.A."/>
            <person name="Galle R.F."/>
            <person name="George R.A."/>
            <person name="Lewis S.E."/>
            <person name="Richards S."/>
            <person name="Ashburner M."/>
            <person name="Henderson S.N."/>
            <person name="Sutton G.G."/>
            <person name="Wortman J.R."/>
            <person name="Yandell M.D."/>
            <person name="Zhang Q."/>
            <person name="Chen L.X."/>
            <person name="Brandon R.C."/>
            <person name="Rogers Y.-H.C."/>
            <person name="Blazej R.G."/>
            <person name="Champe M."/>
            <person name="Pfeiffer B.D."/>
            <person name="Wan K.H."/>
            <person name="Doyle C."/>
            <person name="Baxter E.G."/>
            <person name="Helt G."/>
            <person name="Nelson C.R."/>
            <person name="Miklos G.L.G."/>
            <person name="Abril J.F."/>
            <person name="Agbayani A."/>
            <person name="An H.-J."/>
            <person name="Andrews-Pfannkoch C."/>
            <person name="Baldwin D."/>
            <person name="Ballew R.M."/>
            <person name="Basu A."/>
            <person name="Baxendale J."/>
            <person name="Bayraktaroglu L."/>
            <person name="Beasley E.M."/>
            <person name="Beeson K.Y."/>
            <person name="Benos P.V."/>
            <person name="Berman B.P."/>
            <person name="Bhandari D."/>
            <person name="Bolshakov S."/>
            <person name="Borkova D."/>
            <person name="Botchan M.R."/>
            <person name="Bouck J."/>
            <person name="Brokstein P."/>
            <person name="Brottier P."/>
            <person name="Burtis K.C."/>
            <person name="Busam D.A."/>
            <person name="Butler H."/>
            <person name="Cadieu E."/>
            <person name="Center A."/>
            <person name="Chandra I."/>
            <person name="Cherry J.M."/>
            <person name="Cawley S."/>
            <person name="Dahlke C."/>
            <person name="Davenport L.B."/>
            <person name="Davies P."/>
            <person name="de Pablos B."/>
            <person name="Delcher A."/>
            <person name="Deng Z."/>
            <person name="Mays A.D."/>
            <person name="Dew I."/>
            <person name="Dietz S.M."/>
            <person name="Dodson K."/>
            <person name="Doup L.E."/>
            <person name="Downes M."/>
            <person name="Dugan-Rocha S."/>
            <person name="Dunkov B.C."/>
            <person name="Dunn P."/>
            <person name="Durbin K.J."/>
            <person name="Evangelista C.C."/>
            <person name="Ferraz C."/>
            <person name="Ferriera S."/>
            <person name="Fleischmann W."/>
            <person name="Fosler C."/>
            <person name="Gabrielian A.E."/>
            <person name="Garg N.S."/>
            <person name="Gelbart W.M."/>
            <person name="Glasser K."/>
            <person name="Glodek A."/>
            <person name="Gong F."/>
            <person name="Gorrell J.H."/>
            <person name="Gu Z."/>
            <person name="Guan P."/>
            <person name="Harris M."/>
            <person name="Harris N.L."/>
            <person name="Harvey D.A."/>
            <person name="Heiman T.J."/>
            <person name="Hernandez J.R."/>
            <person name="Houck J."/>
            <person name="Hostin D."/>
            <person name="Houston K.A."/>
            <person name="Howland T.J."/>
            <person name="Wei M.-H."/>
            <person name="Ibegwam C."/>
            <person name="Jalali M."/>
            <person name="Kalush F."/>
            <person name="Karpen G.H."/>
            <person name="Ke Z."/>
            <person name="Kennison J.A."/>
            <person name="Ketchum K.A."/>
            <person name="Kimmel B.E."/>
            <person name="Kodira C.D."/>
            <person name="Kraft C.L."/>
            <person name="Kravitz S."/>
            <person name="Kulp D."/>
            <person name="Lai Z."/>
            <person name="Lasko P."/>
            <person name="Lei Y."/>
            <person name="Levitsky A.A."/>
            <person name="Li J.H."/>
            <person name="Li Z."/>
            <person name="Liang Y."/>
            <person name="Lin X."/>
            <person name="Liu X."/>
            <person name="Mattei B."/>
            <person name="McIntosh T.C."/>
            <person name="McLeod M.P."/>
            <person name="McPherson D."/>
            <person name="Merkulov G."/>
            <person name="Milshina N.V."/>
            <person name="Mobarry C."/>
            <person name="Morris J."/>
            <person name="Moshrefi A."/>
            <person name="Mount S.M."/>
            <person name="Moy M."/>
            <person name="Murphy B."/>
            <person name="Murphy L."/>
            <person name="Muzny D.M."/>
            <person name="Nelson D.L."/>
            <person name="Nelson D.R."/>
            <person name="Nelson K.A."/>
            <person name="Nixon K."/>
            <person name="Nusskern D.R."/>
            <person name="Pacleb J.M."/>
            <person name="Palazzolo M."/>
            <person name="Pittman G.S."/>
            <person name="Pan S."/>
            <person name="Pollard J."/>
            <person name="Puri V."/>
            <person name="Reese M.G."/>
            <person name="Reinert K."/>
            <person name="Remington K."/>
            <person name="Saunders R.D.C."/>
            <person name="Scheeler F."/>
            <person name="Shen H."/>
            <person name="Shue B.C."/>
            <person name="Siden-Kiamos I."/>
            <person name="Simpson M."/>
            <person name="Skupski M.P."/>
            <person name="Smith T.J."/>
            <person name="Spier E."/>
            <person name="Spradling A.C."/>
            <person name="Stapleton M."/>
            <person name="Strong R."/>
            <person name="Sun E."/>
            <person name="Svirskas R."/>
            <person name="Tector C."/>
            <person name="Turner R."/>
            <person name="Venter E."/>
            <person name="Wang A.H."/>
            <person name="Wang X."/>
            <person name="Wang Z.-Y."/>
            <person name="Wassarman D.A."/>
            <person name="Weinstock G.M."/>
            <person name="Weissenbach J."/>
            <person name="Williams S.M."/>
            <person name="Woodage T."/>
            <person name="Worley K.C."/>
            <person name="Wu D."/>
            <person name="Yang S."/>
            <person name="Yao Q.A."/>
            <person name="Ye J."/>
            <person name="Yeh R.-F."/>
            <person name="Zaveri J.S."/>
            <person name="Zhan M."/>
            <person name="Zhang G."/>
            <person name="Zhao Q."/>
            <person name="Zheng L."/>
            <person name="Zheng X.H."/>
            <person name="Zhong F.N."/>
            <person name="Zhong W."/>
            <person name="Zhou X."/>
            <person name="Zhu S.C."/>
            <person name="Zhu X."/>
            <person name="Smith H.O."/>
            <person name="Gibbs R.A."/>
            <person name="Myers E.W."/>
            <person name="Rubin G.M."/>
            <person name="Venter J.C."/>
        </authorList>
    </citation>
    <scope>NUCLEOTIDE SEQUENCE [LARGE SCALE GENOMIC DNA]</scope>
    <source>
        <strain>Berkeley</strain>
    </source>
</reference>
<reference evidence="9 11" key="3">
    <citation type="journal article" date="2002" name="Genome Biol.">
        <title>Annotation of the Drosophila melanogaster euchromatic genome: a systematic review.</title>
        <authorList>
            <person name="Misra S."/>
            <person name="Crosby M.A."/>
            <person name="Mungall C.J."/>
            <person name="Matthews B.B."/>
            <person name="Campbell K.S."/>
            <person name="Hradecky P."/>
            <person name="Huang Y."/>
            <person name="Kaminker J.S."/>
            <person name="Millburn G.H."/>
            <person name="Prochnik S.E."/>
            <person name="Smith C.D."/>
            <person name="Tupy J.L."/>
            <person name="Whitfield E.J."/>
            <person name="Bayraktaroglu L."/>
            <person name="Berman B.P."/>
            <person name="Bettencourt B.R."/>
            <person name="Celniker S.E."/>
            <person name="de Grey A.D.N.J."/>
            <person name="Drysdale R.A."/>
            <person name="Harris N.L."/>
            <person name="Richter J."/>
            <person name="Russo S."/>
            <person name="Schroeder A.J."/>
            <person name="Shu S.Q."/>
            <person name="Stapleton M."/>
            <person name="Yamada C."/>
            <person name="Ashburner M."/>
            <person name="Gelbart W.M."/>
            <person name="Rubin G.M."/>
            <person name="Lewis S.E."/>
        </authorList>
    </citation>
    <scope>GENOME REANNOTATION</scope>
    <scope>ALTERNATIVE SPLICING</scope>
    <source>
        <strain>Berkeley</strain>
    </source>
</reference>
<reference evidence="9 12" key="4">
    <citation type="submission" date="2004-08" db="EMBL/GenBank/DDBJ databases">
        <authorList>
            <person name="Stapleton M."/>
            <person name="Carlson J.W."/>
            <person name="Chavez C."/>
            <person name="Frise E."/>
            <person name="George R.A."/>
            <person name="Pacleb J.M."/>
            <person name="Park S."/>
            <person name="Wan K.H."/>
            <person name="Yu C."/>
            <person name="Rubin G.M."/>
            <person name="Celniker S.E."/>
        </authorList>
    </citation>
    <scope>NUCLEOTIDE SEQUENCE [LARGE SCALE MRNA] (ISOFORM A)</scope>
    <source>
        <strain evidence="12">Berkeley</strain>
        <tissue>Head</tissue>
    </source>
</reference>
<reference key="5">
    <citation type="journal article" date="2013" name="Nature">
        <title>Structures of the human and Drosophila 80S ribosome.</title>
        <authorList>
            <person name="Anger A.M."/>
            <person name="Armache J.P."/>
            <person name="Berninghausen O."/>
            <person name="Habeck M."/>
            <person name="Subklewe M."/>
            <person name="Wilson D.N."/>
            <person name="Beckmann R."/>
        </authorList>
    </citation>
    <scope>STRUCTURE BY ELECTRON MICROSCOPY (6.0 ANGSTROMS) OF THE 80S RIBOSOME</scope>
    <scope>SUBCELLULAR LOCATION</scope>
    <scope>SUBUNIT</scope>
</reference>
<name>RS21_DROME</name>
<proteinExistence type="evidence at protein level"/>
<sequence length="83" mass="9167">MENDAGENVDLYVPRKCSASNRIIHAKDHASVQLSIVDVDPETGRQTDGSKTYAICGEIRRMGESDDCIVRLAKKDGIITKNF</sequence>
<comment type="function">
    <text evidence="4">May be an associated component of the ribosome rather than a core structural subunit. May act as a translation initiation factor. Has a role in regulation of cell proliferation in the hematopoietic organs and the imaginal disks of larva.</text>
</comment>
<comment type="subunit">
    <text evidence="4 6">Component of the 40S small ribosomal subunit (PubMed:23636399). Interacts with sta (PubMed:10022917).</text>
</comment>
<comment type="subcellular location">
    <subcellularLocation>
        <location evidence="1">Cytoplasm</location>
        <location evidence="1">Cytosol</location>
    </subcellularLocation>
    <subcellularLocation>
        <location evidence="4 10">Cytoplasm</location>
    </subcellularLocation>
    <subcellularLocation>
        <location evidence="2">Rough endoplasmic reticulum</location>
    </subcellularLocation>
    <text evidence="1 2">Detected on cytosolic polysomes (By similarity). Detected in ribosomes that are associated with the rough endoplasmic reticulum (By similarity).</text>
</comment>
<comment type="alternative products">
    <event type="alternative splicing"/>
    <isoform>
        <id>O76927-1</id>
        <name evidence="5">A</name>
        <name evidence="5">B</name>
        <sequence type="displayed"/>
    </isoform>
    <isoform>
        <id>O76927-2</id>
        <name evidence="5">E</name>
        <sequence type="described" ref="VSP_039463"/>
    </isoform>
</comment>
<comment type="developmental stage">
    <text evidence="4">Uniformly expressed at all developmental stages.</text>
</comment>
<comment type="similarity">
    <text evidence="3">Belongs to the eukaryotic ribosomal protein eS21 family.</text>
</comment>
<organism>
    <name type="scientific">Drosophila melanogaster</name>
    <name type="common">Fruit fly</name>
    <dbReference type="NCBI Taxonomy" id="7227"/>
    <lineage>
        <taxon>Eukaryota</taxon>
        <taxon>Metazoa</taxon>
        <taxon>Ecdysozoa</taxon>
        <taxon>Arthropoda</taxon>
        <taxon>Hexapoda</taxon>
        <taxon>Insecta</taxon>
        <taxon>Pterygota</taxon>
        <taxon>Neoptera</taxon>
        <taxon>Endopterygota</taxon>
        <taxon>Diptera</taxon>
        <taxon>Brachycera</taxon>
        <taxon>Muscomorpha</taxon>
        <taxon>Ephydroidea</taxon>
        <taxon>Drosophilidae</taxon>
        <taxon>Drosophila</taxon>
        <taxon>Sophophora</taxon>
    </lineage>
</organism>
<evidence type="ECO:0000250" key="1">
    <source>
        <dbReference type="UniProtKB" id="P63220"/>
    </source>
</evidence>
<evidence type="ECO:0000250" key="2">
    <source>
        <dbReference type="UniProtKB" id="P63221"/>
    </source>
</evidence>
<evidence type="ECO:0000255" key="3"/>
<evidence type="ECO:0000269" key="4">
    <source>
    </source>
</evidence>
<evidence type="ECO:0000269" key="5">
    <source>
    </source>
</evidence>
<evidence type="ECO:0000269" key="6">
    <source>
    </source>
</evidence>
<evidence type="ECO:0000303" key="7">
    <source>
    </source>
</evidence>
<evidence type="ECO:0000303" key="8">
    <source>
    </source>
</evidence>
<evidence type="ECO:0000305" key="9"/>
<evidence type="ECO:0000305" key="10">
    <source>
    </source>
</evidence>
<evidence type="ECO:0000312" key="11">
    <source>
        <dbReference type="EMBL" id="AAF51191.1"/>
    </source>
</evidence>
<evidence type="ECO:0000312" key="12">
    <source>
        <dbReference type="EMBL" id="AAT94418.1"/>
    </source>
</evidence>
<evidence type="ECO:0000312" key="13">
    <source>
        <dbReference type="EMBL" id="CAA08751.1"/>
    </source>
</evidence>
<gene>
    <name type="primary">RpS21</name>
    <name type="synonym">oho23B</name>
    <name type="ORF">CG2986</name>
</gene>
<protein>
    <recommendedName>
        <fullName evidence="9">Small ribosomal subunit protein eS21</fullName>
    </recommendedName>
    <alternativeName>
        <fullName evidence="7 13">40S ribosomal protein S21</fullName>
    </alternativeName>
    <alternativeName>
        <fullName evidence="11">Overgrown hematopoietic organs at 23B</fullName>
    </alternativeName>
</protein>
<feature type="chain" id="PRO_0000395418" description="Small ribosomal subunit protein eS21">
    <location>
        <begin position="1"/>
        <end position="83"/>
    </location>
</feature>
<feature type="splice variant" id="VSP_039463" description="In isoform E." evidence="8">
    <location>
        <begin position="82"/>
        <end position="83"/>
    </location>
</feature>
<dbReference type="EMBL" id="AJ009557">
    <property type="protein sequence ID" value="CAA08751.1"/>
    <property type="molecule type" value="Genomic_DNA"/>
</dbReference>
<dbReference type="EMBL" id="AE014134">
    <property type="protein sequence ID" value="AAF51191.1"/>
    <property type="molecule type" value="Genomic_DNA"/>
</dbReference>
<dbReference type="EMBL" id="AE014134">
    <property type="protein sequence ID" value="AAN10392.1"/>
    <property type="molecule type" value="Genomic_DNA"/>
</dbReference>
<dbReference type="EMBL" id="AE014134">
    <property type="protein sequence ID" value="AAN10393.2"/>
    <property type="molecule type" value="Genomic_DNA"/>
</dbReference>
<dbReference type="EMBL" id="BT015189">
    <property type="protein sequence ID" value="AAT94418.1"/>
    <property type="molecule type" value="mRNA"/>
</dbReference>
<dbReference type="RefSeq" id="NP_001259970.1">
    <molecule id="O76927-1"/>
    <property type="nucleotide sequence ID" value="NM_001273041.1"/>
</dbReference>
<dbReference type="RefSeq" id="NP_523462.2">
    <molecule id="O76927-2"/>
    <property type="nucleotide sequence ID" value="NM_078738.5"/>
</dbReference>
<dbReference type="RefSeq" id="NP_722853.1">
    <molecule id="O76927-1"/>
    <property type="nucleotide sequence ID" value="NM_164506.4"/>
</dbReference>
<dbReference type="RefSeq" id="NP_722854.1">
    <molecule id="O76927-1"/>
    <property type="nucleotide sequence ID" value="NM_164507.4"/>
</dbReference>
<dbReference type="RefSeq" id="NP_722855.1">
    <molecule id="O76927-1"/>
    <property type="nucleotide sequence ID" value="NM_164508.3"/>
</dbReference>
<dbReference type="PDB" id="4V6W">
    <property type="method" value="EM"/>
    <property type="resolution" value="6.00 A"/>
    <property type="chains" value="AV=1-83"/>
</dbReference>
<dbReference type="PDB" id="6XU6">
    <property type="method" value="EM"/>
    <property type="resolution" value="3.50 A"/>
    <property type="chains" value="AV=1-82"/>
</dbReference>
<dbReference type="PDB" id="6XU7">
    <property type="method" value="EM"/>
    <property type="resolution" value="4.90 A"/>
    <property type="chains" value="AV=1-82"/>
</dbReference>
<dbReference type="PDB" id="6XU8">
    <property type="method" value="EM"/>
    <property type="resolution" value="3.00 A"/>
    <property type="chains" value="AV=1-82"/>
</dbReference>
<dbReference type="PDBsum" id="4V6W"/>
<dbReference type="PDBsum" id="6XU6"/>
<dbReference type="PDBsum" id="6XU7"/>
<dbReference type="PDBsum" id="6XU8"/>
<dbReference type="EMDB" id="EMD-10622"/>
<dbReference type="EMDB" id="EMD-10623"/>
<dbReference type="EMDB" id="EMD-10624"/>
<dbReference type="SMR" id="O76927"/>
<dbReference type="BioGRID" id="59710">
    <property type="interactions" value="139"/>
</dbReference>
<dbReference type="FunCoup" id="O76927">
    <property type="interactions" value="1427"/>
</dbReference>
<dbReference type="IntAct" id="O76927">
    <property type="interactions" value="61"/>
</dbReference>
<dbReference type="STRING" id="7227.FBpp0307130"/>
<dbReference type="PaxDb" id="7227-FBpp0077309"/>
<dbReference type="DNASU" id="33487"/>
<dbReference type="EnsemblMetazoa" id="FBtr0077621">
    <molecule id="O76927-1"/>
    <property type="protein sequence ID" value="FBpp0077307"/>
    <property type="gene ID" value="FBgn0015521"/>
</dbReference>
<dbReference type="EnsemblMetazoa" id="FBtr0077622">
    <molecule id="O76927-1"/>
    <property type="protein sequence ID" value="FBpp0077308"/>
    <property type="gene ID" value="FBgn0015521"/>
</dbReference>
<dbReference type="EnsemblMetazoa" id="FBtr0077623">
    <molecule id="O76927-1"/>
    <property type="protein sequence ID" value="FBpp0077309"/>
    <property type="gene ID" value="FBgn0015521"/>
</dbReference>
<dbReference type="EnsemblMetazoa" id="FBtr0273293">
    <molecule id="O76927-2"/>
    <property type="protein sequence ID" value="FBpp0271801"/>
    <property type="gene ID" value="FBgn0015521"/>
</dbReference>
<dbReference type="EnsemblMetazoa" id="FBtr0335131">
    <molecule id="O76927-1"/>
    <property type="protein sequence ID" value="FBpp0307130"/>
    <property type="gene ID" value="FBgn0015521"/>
</dbReference>
<dbReference type="GeneID" id="33487"/>
<dbReference type="KEGG" id="dme:Dmel_CG2986"/>
<dbReference type="UCSC" id="CG2986-RA">
    <molecule id="O76927-1"/>
    <property type="organism name" value="d. melanogaster"/>
</dbReference>
<dbReference type="AGR" id="FB:FBgn0015521"/>
<dbReference type="CTD" id="6227"/>
<dbReference type="FlyBase" id="FBgn0015521">
    <property type="gene designation" value="RpS21"/>
</dbReference>
<dbReference type="VEuPathDB" id="VectorBase:FBgn0015521"/>
<dbReference type="eggNOG" id="KOG3486">
    <property type="taxonomic scope" value="Eukaryota"/>
</dbReference>
<dbReference type="GeneTree" id="ENSGT00390000017515"/>
<dbReference type="InParanoid" id="O76927"/>
<dbReference type="OMA" id="GESDACM"/>
<dbReference type="OrthoDB" id="278325at2759"/>
<dbReference type="PhylomeDB" id="O76927"/>
<dbReference type="Reactome" id="R-DME-156827">
    <property type="pathway name" value="L13a-mediated translational silencing of Ceruloplasmin expression"/>
</dbReference>
<dbReference type="Reactome" id="R-DME-1799339">
    <property type="pathway name" value="SRP-dependent cotranslational protein targeting to membrane"/>
</dbReference>
<dbReference type="Reactome" id="R-DME-72649">
    <property type="pathway name" value="Translation initiation complex formation"/>
</dbReference>
<dbReference type="Reactome" id="R-DME-72689">
    <property type="pathway name" value="Formation of a pool of free 40S subunits"/>
</dbReference>
<dbReference type="Reactome" id="R-DME-72695">
    <property type="pathway name" value="Formation of the ternary complex, and subsequently, the 43S complex"/>
</dbReference>
<dbReference type="Reactome" id="R-DME-72702">
    <property type="pathway name" value="Ribosomal scanning and start codon recognition"/>
</dbReference>
<dbReference type="Reactome" id="R-DME-72706">
    <property type="pathway name" value="GTP hydrolysis and joining of the 60S ribosomal subunit"/>
</dbReference>
<dbReference type="Reactome" id="R-DME-975956">
    <property type="pathway name" value="Nonsense Mediated Decay (NMD) independent of the Exon Junction Complex (EJC)"/>
</dbReference>
<dbReference type="Reactome" id="R-DME-975957">
    <property type="pathway name" value="Nonsense Mediated Decay (NMD) enhanced by the Exon Junction Complex (EJC)"/>
</dbReference>
<dbReference type="SignaLink" id="O76927"/>
<dbReference type="BioGRID-ORCS" id="33487">
    <property type="hits" value="0 hits in 1 CRISPR screen"/>
</dbReference>
<dbReference type="ChiTaRS" id="RpS21">
    <property type="organism name" value="fly"/>
</dbReference>
<dbReference type="GenomeRNAi" id="33487"/>
<dbReference type="PRO" id="PR:O76927"/>
<dbReference type="Proteomes" id="UP000000803">
    <property type="component" value="Chromosome 2L"/>
</dbReference>
<dbReference type="Bgee" id="FBgn0015521">
    <property type="expression patterns" value="Expressed in eye disc (Drosophila) and 291 other cell types or tissues"/>
</dbReference>
<dbReference type="ExpressionAtlas" id="O76927">
    <property type="expression patterns" value="baseline and differential"/>
</dbReference>
<dbReference type="GO" id="GO:0022626">
    <property type="term" value="C:cytosolic ribosome"/>
    <property type="evidence" value="ECO:0000314"/>
    <property type="project" value="FlyBase"/>
</dbReference>
<dbReference type="GO" id="GO:0022627">
    <property type="term" value="C:cytosolic small ribosomal subunit"/>
    <property type="evidence" value="ECO:0000318"/>
    <property type="project" value="GO_Central"/>
</dbReference>
<dbReference type="GO" id="GO:0005840">
    <property type="term" value="C:ribosome"/>
    <property type="evidence" value="ECO:0000314"/>
    <property type="project" value="UniProtKB"/>
</dbReference>
<dbReference type="GO" id="GO:0005791">
    <property type="term" value="C:rough endoplasmic reticulum"/>
    <property type="evidence" value="ECO:0007669"/>
    <property type="project" value="UniProtKB-SubCell"/>
</dbReference>
<dbReference type="GO" id="GO:0043022">
    <property type="term" value="F:ribosome binding"/>
    <property type="evidence" value="ECO:0000353"/>
    <property type="project" value="UniProtKB"/>
</dbReference>
<dbReference type="GO" id="GO:0003735">
    <property type="term" value="F:structural constituent of ribosome"/>
    <property type="evidence" value="ECO:0000314"/>
    <property type="project" value="FlyBase"/>
</dbReference>
<dbReference type="GO" id="GO:0002181">
    <property type="term" value="P:cytoplasmic translation"/>
    <property type="evidence" value="ECO:0000304"/>
    <property type="project" value="FlyBase"/>
</dbReference>
<dbReference type="GO" id="GO:0000447">
    <property type="term" value="P:endonucleolytic cleavage in ITS1 to separate SSU-rRNA from 5.8S rRNA and LSU-rRNA from tricistronic rRNA transcript (SSU-rRNA, 5.8S rRNA, LSU-rRNA)"/>
    <property type="evidence" value="ECO:0000318"/>
    <property type="project" value="GO_Central"/>
</dbReference>
<dbReference type="GO" id="GO:0000461">
    <property type="term" value="P:endonucleolytic cleavage to generate mature 3'-end of SSU-rRNA from (SSU-rRNA, 5.8S rRNA, LSU-rRNA)"/>
    <property type="evidence" value="ECO:0000318"/>
    <property type="project" value="GO_Central"/>
</dbReference>
<dbReference type="GO" id="GO:0048542">
    <property type="term" value="P:lymph gland development"/>
    <property type="evidence" value="ECO:0000315"/>
    <property type="project" value="FlyBase"/>
</dbReference>
<dbReference type="GO" id="GO:0042127">
    <property type="term" value="P:regulation of cell population proliferation"/>
    <property type="evidence" value="ECO:0000315"/>
    <property type="project" value="UniProtKB"/>
</dbReference>
<dbReference type="GO" id="GO:0006417">
    <property type="term" value="P:regulation of translation"/>
    <property type="evidence" value="ECO:0007669"/>
    <property type="project" value="UniProtKB-KW"/>
</dbReference>
<dbReference type="FunFam" id="3.30.1230.20:FF:000001">
    <property type="entry name" value="40S ribosomal protein S21"/>
    <property type="match status" value="1"/>
</dbReference>
<dbReference type="Gene3D" id="3.30.1230.20">
    <property type="match status" value="1"/>
</dbReference>
<dbReference type="InterPro" id="IPR001931">
    <property type="entry name" value="Ribosomal_eS21"/>
</dbReference>
<dbReference type="InterPro" id="IPR018279">
    <property type="entry name" value="Ribosomal_eS21_CS"/>
</dbReference>
<dbReference type="InterPro" id="IPR038579">
    <property type="entry name" value="Ribosomal_eS21_sf"/>
</dbReference>
<dbReference type="PANTHER" id="PTHR10442">
    <property type="entry name" value="40S RIBOSOMAL PROTEIN S21"/>
    <property type="match status" value="1"/>
</dbReference>
<dbReference type="Pfam" id="PF01249">
    <property type="entry name" value="Ribosomal_S21e"/>
    <property type="match status" value="1"/>
</dbReference>
<dbReference type="PIRSF" id="PIRSF002148">
    <property type="entry name" value="Ribosomal_S21e"/>
    <property type="match status" value="1"/>
</dbReference>
<dbReference type="PROSITE" id="PS00996">
    <property type="entry name" value="RIBOSOMAL_S21E"/>
    <property type="match status" value="1"/>
</dbReference>